<dbReference type="EMBL" id="AL391840">
    <property type="status" value="NOT_ANNOTATED_CDS"/>
    <property type="molecule type" value="Genomic_DNA"/>
</dbReference>
<dbReference type="EMBL" id="CH471051">
    <property type="protein sequence ID" value="EAW48705.1"/>
    <property type="molecule type" value="Genomic_DNA"/>
</dbReference>
<dbReference type="EMBL" id="CH471051">
    <property type="protein sequence ID" value="EAW48706.1"/>
    <property type="molecule type" value="Genomic_DNA"/>
</dbReference>
<dbReference type="EMBL" id="BC050327">
    <property type="protein sequence ID" value="AAH50327.1"/>
    <property type="molecule type" value="mRNA"/>
</dbReference>
<dbReference type="CCDS" id="CCDS4990.1"/>
<dbReference type="RefSeq" id="NP_001116241.1">
    <property type="nucleotide sequence ID" value="NM_001122769.3"/>
</dbReference>
<dbReference type="RefSeq" id="NP_859065.2">
    <property type="nucleotide sequence ID" value="NM_181714.4"/>
</dbReference>
<dbReference type="RefSeq" id="XP_005248722.1">
    <property type="nucleotide sequence ID" value="XM_005248665.5"/>
</dbReference>
<dbReference type="RefSeq" id="XP_011533806.1">
    <property type="nucleotide sequence ID" value="XM_011535504.2"/>
</dbReference>
<dbReference type="RefSeq" id="XP_047274207.1">
    <property type="nucleotide sequence ID" value="XM_047418251.1"/>
</dbReference>
<dbReference type="SMR" id="Q86VQ0"/>
<dbReference type="BioGRID" id="127950">
    <property type="interactions" value="127"/>
</dbReference>
<dbReference type="FunCoup" id="Q86VQ0">
    <property type="interactions" value="363"/>
</dbReference>
<dbReference type="IntAct" id="Q86VQ0">
    <property type="interactions" value="121"/>
</dbReference>
<dbReference type="MINT" id="Q86VQ0"/>
<dbReference type="STRING" id="9606.ENSP00000376686"/>
<dbReference type="iPTMnet" id="Q86VQ0"/>
<dbReference type="PhosphoSitePlus" id="Q86VQ0"/>
<dbReference type="BioMuta" id="LCA5"/>
<dbReference type="DMDM" id="71658798"/>
<dbReference type="jPOST" id="Q86VQ0"/>
<dbReference type="MassIVE" id="Q86VQ0"/>
<dbReference type="PaxDb" id="9606-ENSP00000376686"/>
<dbReference type="PeptideAtlas" id="Q86VQ0"/>
<dbReference type="ProteomicsDB" id="70054"/>
<dbReference type="Pumba" id="Q86VQ0"/>
<dbReference type="Antibodypedia" id="31597">
    <property type="antibodies" value="131 antibodies from 24 providers"/>
</dbReference>
<dbReference type="DNASU" id="167691"/>
<dbReference type="Ensembl" id="ENST00000369846.9">
    <property type="protein sequence ID" value="ENSP00000358861.4"/>
    <property type="gene ID" value="ENSG00000135338.14"/>
</dbReference>
<dbReference type="Ensembl" id="ENST00000392959.5">
    <property type="protein sequence ID" value="ENSP00000376686.1"/>
    <property type="gene ID" value="ENSG00000135338.14"/>
</dbReference>
<dbReference type="GeneID" id="167691"/>
<dbReference type="KEGG" id="hsa:167691"/>
<dbReference type="MANE-Select" id="ENST00000369846.9">
    <property type="protein sequence ID" value="ENSP00000358861.4"/>
    <property type="RefSeq nucleotide sequence ID" value="NM_001122769.3"/>
    <property type="RefSeq protein sequence ID" value="NP_001116241.1"/>
</dbReference>
<dbReference type="UCSC" id="uc003pix.4">
    <property type="organism name" value="human"/>
</dbReference>
<dbReference type="AGR" id="HGNC:31923"/>
<dbReference type="CTD" id="167691"/>
<dbReference type="DisGeNET" id="167691"/>
<dbReference type="GeneCards" id="LCA5"/>
<dbReference type="HGNC" id="HGNC:31923">
    <property type="gene designation" value="LCA5"/>
</dbReference>
<dbReference type="HPA" id="ENSG00000135338">
    <property type="expression patterns" value="Low tissue specificity"/>
</dbReference>
<dbReference type="MalaCards" id="LCA5"/>
<dbReference type="MIM" id="604537">
    <property type="type" value="phenotype"/>
</dbReference>
<dbReference type="MIM" id="611408">
    <property type="type" value="gene"/>
</dbReference>
<dbReference type="neXtProt" id="NX_Q86VQ0"/>
<dbReference type="OpenTargets" id="ENSG00000135338"/>
<dbReference type="Orphanet" id="65">
    <property type="disease" value="Leber congenital amaurosis"/>
</dbReference>
<dbReference type="Orphanet" id="364055">
    <property type="disease" value="Severe early-childhood-onset retinal dystrophy"/>
</dbReference>
<dbReference type="PharmGKB" id="PA142671563"/>
<dbReference type="VEuPathDB" id="HostDB:ENSG00000135338"/>
<dbReference type="eggNOG" id="ENOG502QQG3">
    <property type="taxonomic scope" value="Eukaryota"/>
</dbReference>
<dbReference type="GeneTree" id="ENSGT00560000077266"/>
<dbReference type="HOGENOM" id="CLU_017042_0_0_1"/>
<dbReference type="InParanoid" id="Q86VQ0"/>
<dbReference type="OMA" id="YQIQNID"/>
<dbReference type="OrthoDB" id="2123794at2759"/>
<dbReference type="PAN-GO" id="Q86VQ0">
    <property type="GO annotations" value="2 GO annotations based on evolutionary models"/>
</dbReference>
<dbReference type="PhylomeDB" id="Q86VQ0"/>
<dbReference type="TreeFam" id="TF323306"/>
<dbReference type="PathwayCommons" id="Q86VQ0"/>
<dbReference type="SignaLink" id="Q86VQ0"/>
<dbReference type="BioGRID-ORCS" id="167691">
    <property type="hits" value="7 hits in 1149 CRISPR screens"/>
</dbReference>
<dbReference type="CD-CODE" id="8C2F96ED">
    <property type="entry name" value="Centrosome"/>
</dbReference>
<dbReference type="GeneWiki" id="LCA5"/>
<dbReference type="GenomeRNAi" id="167691"/>
<dbReference type="Pharos" id="Q86VQ0">
    <property type="development level" value="Tbio"/>
</dbReference>
<dbReference type="PRO" id="PR:Q86VQ0"/>
<dbReference type="Proteomes" id="UP000005640">
    <property type="component" value="Chromosome 6"/>
</dbReference>
<dbReference type="RNAct" id="Q86VQ0">
    <property type="molecule type" value="protein"/>
</dbReference>
<dbReference type="Bgee" id="ENSG00000135338">
    <property type="expression patterns" value="Expressed in mucosa of paranasal sinus and 149 other cell types or tissues"/>
</dbReference>
<dbReference type="ExpressionAtlas" id="Q86VQ0">
    <property type="expression patterns" value="baseline and differential"/>
</dbReference>
<dbReference type="GO" id="GO:0005930">
    <property type="term" value="C:axoneme"/>
    <property type="evidence" value="ECO:0000318"/>
    <property type="project" value="GO_Central"/>
</dbReference>
<dbReference type="GO" id="GO:0005813">
    <property type="term" value="C:centrosome"/>
    <property type="evidence" value="ECO:0007669"/>
    <property type="project" value="UniProtKB-SubCell"/>
</dbReference>
<dbReference type="GO" id="GO:0036064">
    <property type="term" value="C:ciliary basal body"/>
    <property type="evidence" value="ECO:0000314"/>
    <property type="project" value="HPA"/>
</dbReference>
<dbReference type="GO" id="GO:0005929">
    <property type="term" value="C:cilium"/>
    <property type="evidence" value="ECO:0000314"/>
    <property type="project" value="MGI"/>
</dbReference>
<dbReference type="GO" id="GO:0005739">
    <property type="term" value="C:mitochondrion"/>
    <property type="evidence" value="ECO:0000314"/>
    <property type="project" value="HPA"/>
</dbReference>
<dbReference type="GO" id="GO:0005730">
    <property type="term" value="C:nucleolus"/>
    <property type="evidence" value="ECO:0000314"/>
    <property type="project" value="HPA"/>
</dbReference>
<dbReference type="GO" id="GO:0005654">
    <property type="term" value="C:nucleoplasm"/>
    <property type="evidence" value="ECO:0000314"/>
    <property type="project" value="HPA"/>
</dbReference>
<dbReference type="GO" id="GO:0032391">
    <property type="term" value="C:photoreceptor connecting cilium"/>
    <property type="evidence" value="ECO:0000314"/>
    <property type="project" value="UniProtKB"/>
</dbReference>
<dbReference type="GO" id="GO:0044877">
    <property type="term" value="F:protein-containing complex binding"/>
    <property type="evidence" value="ECO:0000314"/>
    <property type="project" value="MGI"/>
</dbReference>
<dbReference type="GO" id="GO:0042073">
    <property type="term" value="P:intraciliary transport"/>
    <property type="evidence" value="ECO:0000318"/>
    <property type="project" value="GO_Central"/>
</dbReference>
<dbReference type="GO" id="GO:0045494">
    <property type="term" value="P:photoreceptor cell maintenance"/>
    <property type="evidence" value="ECO:0000250"/>
    <property type="project" value="UniProtKB"/>
</dbReference>
<dbReference type="GO" id="GO:0015031">
    <property type="term" value="P:protein transport"/>
    <property type="evidence" value="ECO:0007669"/>
    <property type="project" value="UniProtKB-KW"/>
</dbReference>
<dbReference type="InterPro" id="IPR026188">
    <property type="entry name" value="Lebercilin-like"/>
</dbReference>
<dbReference type="InterPro" id="IPR028933">
    <property type="entry name" value="Lebercilin_dom"/>
</dbReference>
<dbReference type="PANTHER" id="PTHR16650">
    <property type="entry name" value="C21ORF13-RELATED"/>
    <property type="match status" value="1"/>
</dbReference>
<dbReference type="PANTHER" id="PTHR16650:SF10">
    <property type="entry name" value="LEBERCILIN"/>
    <property type="match status" value="1"/>
</dbReference>
<dbReference type="Pfam" id="PF15619">
    <property type="entry name" value="Lebercilin"/>
    <property type="match status" value="1"/>
</dbReference>
<protein>
    <recommendedName>
        <fullName evidence="14">Lebercilin</fullName>
    </recommendedName>
    <alternativeName>
        <fullName>Leber congenital amaurosis 5 protein</fullName>
    </alternativeName>
</protein>
<feature type="chain" id="PRO_0000089546" description="Lebercilin">
    <location>
        <begin position="1"/>
        <end position="697"/>
    </location>
</feature>
<feature type="region of interest" description="Disordered" evidence="3">
    <location>
        <begin position="1"/>
        <end position="90"/>
    </location>
</feature>
<feature type="region of interest" description="Disordered" evidence="3">
    <location>
        <begin position="412"/>
        <end position="432"/>
    </location>
</feature>
<feature type="region of interest" description="Disordered" evidence="3">
    <location>
        <begin position="522"/>
        <end position="548"/>
    </location>
</feature>
<feature type="region of interest" description="Disordered" evidence="3">
    <location>
        <begin position="606"/>
        <end position="697"/>
    </location>
</feature>
<feature type="coiled-coil region" evidence="2">
    <location>
        <begin position="103"/>
        <end position="297"/>
    </location>
</feature>
<feature type="coiled-coil region" evidence="2">
    <location>
        <begin position="389"/>
        <end position="485"/>
    </location>
</feature>
<feature type="compositionally biased region" description="Low complexity" evidence="3">
    <location>
        <begin position="32"/>
        <end position="45"/>
    </location>
</feature>
<feature type="compositionally biased region" description="Basic and acidic residues" evidence="3">
    <location>
        <begin position="416"/>
        <end position="432"/>
    </location>
</feature>
<feature type="compositionally biased region" description="Polar residues" evidence="3">
    <location>
        <begin position="527"/>
        <end position="547"/>
    </location>
</feature>
<feature type="compositionally biased region" description="Low complexity" evidence="3">
    <location>
        <begin position="612"/>
        <end position="626"/>
    </location>
</feature>
<feature type="compositionally biased region" description="Acidic residues" evidence="3">
    <location>
        <begin position="686"/>
        <end position="697"/>
    </location>
</feature>
<feature type="modified residue" description="Phosphoserine" evidence="1">
    <location>
        <position position="7"/>
    </location>
</feature>
<feature type="modified residue" description="Phosphoserine" evidence="16">
    <location>
        <position position="45"/>
    </location>
</feature>
<feature type="sequence variant" id="VAR_023094" description="In dbSNP:rs2655655." evidence="4 13">
    <original>L</original>
    <variation>S</variation>
    <location>
        <position position="24"/>
    </location>
</feature>
<feature type="sequence variant" id="VAR_038989" description="In dbSNP:rs34068461.">
    <original>D</original>
    <variation>A</variation>
    <location>
        <position position="26"/>
    </location>
</feature>
<feature type="sequence variant" id="VAR_038990" description="In dbSNP:rs35338066.">
    <original>R</original>
    <variation>Q</variation>
    <location>
        <position position="66"/>
    </location>
</feature>
<feature type="sequence variant" id="VAR_081583" description="In LCA5; uncertain significance." evidence="12">
    <original>R</original>
    <variation>G</variation>
    <location>
        <position position="218"/>
    </location>
</feature>
<feature type="sequence variant" id="VAR_038991" description="In dbSNP:rs35415141.">
    <original>A</original>
    <variation>P</variation>
    <location>
        <position position="546"/>
    </location>
</feature>
<feature type="sequence variant" id="VAR_038992" description="In dbSNP:rs1875845.">
    <original>G</original>
    <variation>D</variation>
    <location>
        <position position="656"/>
    </location>
</feature>
<feature type="sequence conflict" description="In Ref. 3; AAH50327." evidence="15" ref="3">
    <original>K</original>
    <variation>E</variation>
    <location>
        <position position="15"/>
    </location>
</feature>
<feature type="sequence conflict" description="In Ref. 3; AAH50327." evidence="15" ref="3">
    <original>P</original>
    <variation>R</variation>
    <location>
        <position position="502"/>
    </location>
</feature>
<feature type="sequence conflict" description="In Ref. 3; AAH50327." evidence="15" ref="3">
    <original>D</original>
    <variation>G</variation>
    <location>
        <position position="623"/>
    </location>
</feature>
<gene>
    <name type="primary">LCA5</name>
    <name type="synonym">C6orf152</name>
</gene>
<reference key="1">
    <citation type="journal article" date="2003" name="Nature">
        <title>The DNA sequence and analysis of human chromosome 6.</title>
        <authorList>
            <person name="Mungall A.J."/>
            <person name="Palmer S.A."/>
            <person name="Sims S.K."/>
            <person name="Edwards C.A."/>
            <person name="Ashurst J.L."/>
            <person name="Wilming L."/>
            <person name="Jones M.C."/>
            <person name="Horton R."/>
            <person name="Hunt S.E."/>
            <person name="Scott C.E."/>
            <person name="Gilbert J.G.R."/>
            <person name="Clamp M.E."/>
            <person name="Bethel G."/>
            <person name="Milne S."/>
            <person name="Ainscough R."/>
            <person name="Almeida J.P."/>
            <person name="Ambrose K.D."/>
            <person name="Andrews T.D."/>
            <person name="Ashwell R.I.S."/>
            <person name="Babbage A.K."/>
            <person name="Bagguley C.L."/>
            <person name="Bailey J."/>
            <person name="Banerjee R."/>
            <person name="Barker D.J."/>
            <person name="Barlow K.F."/>
            <person name="Bates K."/>
            <person name="Beare D.M."/>
            <person name="Beasley H."/>
            <person name="Beasley O."/>
            <person name="Bird C.P."/>
            <person name="Blakey S.E."/>
            <person name="Bray-Allen S."/>
            <person name="Brook J."/>
            <person name="Brown A.J."/>
            <person name="Brown J.Y."/>
            <person name="Burford D.C."/>
            <person name="Burrill W."/>
            <person name="Burton J."/>
            <person name="Carder C."/>
            <person name="Carter N.P."/>
            <person name="Chapman J.C."/>
            <person name="Clark S.Y."/>
            <person name="Clark G."/>
            <person name="Clee C.M."/>
            <person name="Clegg S."/>
            <person name="Cobley V."/>
            <person name="Collier R.E."/>
            <person name="Collins J.E."/>
            <person name="Colman L.K."/>
            <person name="Corby N.R."/>
            <person name="Coville G.J."/>
            <person name="Culley K.M."/>
            <person name="Dhami P."/>
            <person name="Davies J."/>
            <person name="Dunn M."/>
            <person name="Earthrowl M.E."/>
            <person name="Ellington A.E."/>
            <person name="Evans K.A."/>
            <person name="Faulkner L."/>
            <person name="Francis M.D."/>
            <person name="Frankish A."/>
            <person name="Frankland J."/>
            <person name="French L."/>
            <person name="Garner P."/>
            <person name="Garnett J."/>
            <person name="Ghori M.J."/>
            <person name="Gilby L.M."/>
            <person name="Gillson C.J."/>
            <person name="Glithero R.J."/>
            <person name="Grafham D.V."/>
            <person name="Grant M."/>
            <person name="Gribble S."/>
            <person name="Griffiths C."/>
            <person name="Griffiths M.N.D."/>
            <person name="Hall R."/>
            <person name="Halls K.S."/>
            <person name="Hammond S."/>
            <person name="Harley J.L."/>
            <person name="Hart E.A."/>
            <person name="Heath P.D."/>
            <person name="Heathcott R."/>
            <person name="Holmes S.J."/>
            <person name="Howden P.J."/>
            <person name="Howe K.L."/>
            <person name="Howell G.R."/>
            <person name="Huckle E."/>
            <person name="Humphray S.J."/>
            <person name="Humphries M.D."/>
            <person name="Hunt A.R."/>
            <person name="Johnson C.M."/>
            <person name="Joy A.A."/>
            <person name="Kay M."/>
            <person name="Keenan S.J."/>
            <person name="Kimberley A.M."/>
            <person name="King A."/>
            <person name="Laird G.K."/>
            <person name="Langford C."/>
            <person name="Lawlor S."/>
            <person name="Leongamornlert D.A."/>
            <person name="Leversha M."/>
            <person name="Lloyd C.R."/>
            <person name="Lloyd D.M."/>
            <person name="Loveland J.E."/>
            <person name="Lovell J."/>
            <person name="Martin S."/>
            <person name="Mashreghi-Mohammadi M."/>
            <person name="Maslen G.L."/>
            <person name="Matthews L."/>
            <person name="McCann O.T."/>
            <person name="McLaren S.J."/>
            <person name="McLay K."/>
            <person name="McMurray A."/>
            <person name="Moore M.J.F."/>
            <person name="Mullikin J.C."/>
            <person name="Niblett D."/>
            <person name="Nickerson T."/>
            <person name="Novik K.L."/>
            <person name="Oliver K."/>
            <person name="Overton-Larty E.K."/>
            <person name="Parker A."/>
            <person name="Patel R."/>
            <person name="Pearce A.V."/>
            <person name="Peck A.I."/>
            <person name="Phillimore B.J.C.T."/>
            <person name="Phillips S."/>
            <person name="Plumb R.W."/>
            <person name="Porter K.M."/>
            <person name="Ramsey Y."/>
            <person name="Ranby S.A."/>
            <person name="Rice C.M."/>
            <person name="Ross M.T."/>
            <person name="Searle S.M."/>
            <person name="Sehra H.K."/>
            <person name="Sheridan E."/>
            <person name="Skuce C.D."/>
            <person name="Smith S."/>
            <person name="Smith M."/>
            <person name="Spraggon L."/>
            <person name="Squares S.L."/>
            <person name="Steward C.A."/>
            <person name="Sycamore N."/>
            <person name="Tamlyn-Hall G."/>
            <person name="Tester J."/>
            <person name="Theaker A.J."/>
            <person name="Thomas D.W."/>
            <person name="Thorpe A."/>
            <person name="Tracey A."/>
            <person name="Tromans A."/>
            <person name="Tubby B."/>
            <person name="Wall M."/>
            <person name="Wallis J.M."/>
            <person name="West A.P."/>
            <person name="White S.S."/>
            <person name="Whitehead S.L."/>
            <person name="Whittaker H."/>
            <person name="Wild A."/>
            <person name="Willey D.J."/>
            <person name="Wilmer T.E."/>
            <person name="Wood J.M."/>
            <person name="Wray P.W."/>
            <person name="Wyatt J.C."/>
            <person name="Young L."/>
            <person name="Younger R.M."/>
            <person name="Bentley D.R."/>
            <person name="Coulson A."/>
            <person name="Durbin R.M."/>
            <person name="Hubbard T."/>
            <person name="Sulston J.E."/>
            <person name="Dunham I."/>
            <person name="Rogers J."/>
            <person name="Beck S."/>
        </authorList>
    </citation>
    <scope>NUCLEOTIDE SEQUENCE [LARGE SCALE GENOMIC DNA]</scope>
</reference>
<reference key="2">
    <citation type="submission" date="2005-09" db="EMBL/GenBank/DDBJ databases">
        <authorList>
            <person name="Mural R.J."/>
            <person name="Istrail S."/>
            <person name="Sutton G.G."/>
            <person name="Florea L."/>
            <person name="Halpern A.L."/>
            <person name="Mobarry C.M."/>
            <person name="Lippert R."/>
            <person name="Walenz B."/>
            <person name="Shatkay H."/>
            <person name="Dew I."/>
            <person name="Miller J.R."/>
            <person name="Flanigan M.J."/>
            <person name="Edwards N.J."/>
            <person name="Bolanos R."/>
            <person name="Fasulo D."/>
            <person name="Halldorsson B.V."/>
            <person name="Hannenhalli S."/>
            <person name="Turner R."/>
            <person name="Yooseph S."/>
            <person name="Lu F."/>
            <person name="Nusskern D.R."/>
            <person name="Shue B.C."/>
            <person name="Zheng X.H."/>
            <person name="Zhong F."/>
            <person name="Delcher A.L."/>
            <person name="Huson D.H."/>
            <person name="Kravitz S.A."/>
            <person name="Mouchard L."/>
            <person name="Reinert K."/>
            <person name="Remington K.A."/>
            <person name="Clark A.G."/>
            <person name="Waterman M.S."/>
            <person name="Eichler E.E."/>
            <person name="Adams M.D."/>
            <person name="Hunkapiller M.W."/>
            <person name="Myers E.W."/>
            <person name="Venter J.C."/>
        </authorList>
    </citation>
    <scope>NUCLEOTIDE SEQUENCE [LARGE SCALE GENOMIC DNA]</scope>
    <scope>VARIANT SER-24</scope>
</reference>
<reference key="3">
    <citation type="journal article" date="2004" name="Genome Res.">
        <title>The status, quality, and expansion of the NIH full-length cDNA project: the Mammalian Gene Collection (MGC).</title>
        <authorList>
            <consortium name="The MGC Project Team"/>
        </authorList>
    </citation>
    <scope>NUCLEOTIDE SEQUENCE [LARGE SCALE MRNA]</scope>
    <scope>VARIANT SER-24</scope>
    <source>
        <tissue>Testis</tissue>
    </source>
</reference>
<reference key="4">
    <citation type="journal article" date="2007" name="Hum. Mutat.">
        <title>Mutations in LCA5 are an uncommon cause of Leber congenital amaurosis (LCA) type II.</title>
        <authorList>
            <person name="Gerber S."/>
            <person name="Hanein S."/>
            <person name="Perrault I."/>
            <person name="Delphin N."/>
            <person name="Aboussair N."/>
            <person name="Leowski C."/>
            <person name="Dufier J.-L."/>
            <person name="Roche O."/>
            <person name="Munnich A."/>
            <person name="Kaplan J."/>
            <person name="Rozet J.-M."/>
        </authorList>
    </citation>
    <scope>INVOLVEMENT IN LCA5</scope>
</reference>
<reference key="5">
    <citation type="journal article" date="2007" name="Nat. Genet.">
        <title>Mutations in LCA5, encoding the ciliary protein lebercilin, cause Leber congenital amaurosis.</title>
        <authorList>
            <person name="den Hollander A.I."/>
            <person name="Koenekoop R.K."/>
            <person name="Mohamed M.D."/>
            <person name="Arts H.H."/>
            <person name="Boldt K."/>
            <person name="Towns K.V."/>
            <person name="Sedmak T."/>
            <person name="Beer M."/>
            <person name="Nagel-Wolfrum K."/>
            <person name="McKibbin M."/>
            <person name="Dharmaraj S."/>
            <person name="Lopez I."/>
            <person name="Ivings L."/>
            <person name="Williams G.A."/>
            <person name="Springell K."/>
            <person name="Woods C.G."/>
            <person name="Jafri H."/>
            <person name="Rashid Y."/>
            <person name="Strom T.M."/>
            <person name="van der Zwaag B."/>
            <person name="Gosens I."/>
            <person name="Kersten F.F.J."/>
            <person name="van Wijk E."/>
            <person name="Veltman J.A."/>
            <person name="Zonneveld M.N."/>
            <person name="van Beersum S.E.C."/>
            <person name="Maumenee I.H."/>
            <person name="Wolfrum U."/>
            <person name="Cheetham M.E."/>
            <person name="Ueffing M."/>
            <person name="Cremers F.P.M."/>
            <person name="Inglehearn C.F."/>
            <person name="Roepman R."/>
        </authorList>
    </citation>
    <scope>SUBCELLULAR LOCATION</scope>
    <scope>INVOLVEMENT IN LCA5</scope>
    <scope>TISSUE SPECIFICITY</scope>
</reference>
<reference key="6">
    <citation type="journal article" date="2008" name="Mol. Vis.">
        <title>Identification of a novel splice-site mutation in the lebercilin (LCA5) gene causing Leber congenital amaurosis.</title>
        <authorList>
            <person name="Ramprasad V.L."/>
            <person name="Soumittra N."/>
            <person name="Nancarrow D."/>
            <person name="Sen P."/>
            <person name="McKibbin M."/>
            <person name="Williams G.A."/>
            <person name="Arokiasamy T."/>
            <person name="Lakshmipathy P."/>
            <person name="Inglehearn C.F."/>
            <person name="Kumaramanickavel G."/>
        </authorList>
    </citation>
    <scope>INVOLVEMENT IN LCA5</scope>
</reference>
<reference key="7">
    <citation type="journal article" date="2009" name="Am. J. Hum. Genet.">
        <title>OFD1 is mutated in X-linked Joubert syndrome and interacts with LCA5-encoded lebercilin.</title>
        <authorList>
            <person name="Coene K.L."/>
            <person name="Roepman R."/>
            <person name="Doherty D."/>
            <person name="Afroze B."/>
            <person name="Kroes H.Y."/>
            <person name="Letteboer S.J."/>
            <person name="Ngu L.H."/>
            <person name="Budny B."/>
            <person name="van Wijk E."/>
            <person name="Gorden N.T."/>
            <person name="Azhimi M."/>
            <person name="Thauvin-Robinet C."/>
            <person name="Veltman J.A."/>
            <person name="Boink M."/>
            <person name="Kleefstra T."/>
            <person name="Cremers F.P."/>
            <person name="van Bokhoven H."/>
            <person name="de Brouwer A.P."/>
        </authorList>
    </citation>
    <scope>INTERACTION WITH OFD1</scope>
</reference>
<reference key="8">
    <citation type="journal article" date="2009" name="Hum. Mol. Genet.">
        <title>Usher syndrome and Leber congenital amaurosis are molecularly linked via a novel isoform of the centrosomal ninein-like protein.</title>
        <authorList>
            <person name="van Wijk E."/>
            <person name="Kersten F.F.J."/>
            <person name="Kartono A."/>
            <person name="Mans D.A."/>
            <person name="Brandwijk K."/>
            <person name="Letteboer S.J.F."/>
            <person name="Peters T.A."/>
            <person name="Maerker T."/>
            <person name="Yan X."/>
            <person name="Cremers C.W.R.J."/>
            <person name="Cremers F.P.M."/>
            <person name="Wolfrum U."/>
            <person name="Roepman R."/>
            <person name="Kremer H."/>
        </authorList>
    </citation>
    <scope>INTERACTION WITH NINL</scope>
</reference>
<reference key="9">
    <citation type="journal article" date="2012" name="Hum. Mol. Genet.">
        <title>FAM161A, associated with retinitis pigmentosa, is a component of the cilia-basal body complex and interacts with proteins involved in ciliopathies.</title>
        <authorList>
            <person name="Di Gioia S.A."/>
            <person name="Letteboer S.J."/>
            <person name="Kostic C."/>
            <person name="Bandah-Rozenfeld D."/>
            <person name="Hetterschijt L."/>
            <person name="Sharon D."/>
            <person name="Arsenijevic Y."/>
            <person name="Roepman R."/>
            <person name="Rivolta C."/>
        </authorList>
    </citation>
    <scope>INTERACTION WITH FAM161A</scope>
</reference>
<reference key="10">
    <citation type="journal article" date="2013" name="J. Proteome Res.">
        <title>Toward a comprehensive characterization of a human cancer cell phosphoproteome.</title>
        <authorList>
            <person name="Zhou H."/>
            <person name="Di Palma S."/>
            <person name="Preisinger C."/>
            <person name="Peng M."/>
            <person name="Polat A.N."/>
            <person name="Heck A.J."/>
            <person name="Mohammed S."/>
        </authorList>
    </citation>
    <scope>PHOSPHORYLATION [LARGE SCALE ANALYSIS] AT SER-45</scope>
    <scope>IDENTIFICATION BY MASS SPECTROMETRY [LARGE SCALE ANALYSIS]</scope>
    <source>
        <tissue>Erythroleukemia</tissue>
    </source>
</reference>
<reference key="11">
    <citation type="journal article" date="2011" name="J. Clin. Invest.">
        <title>Disruption of intraflagellar protein transport in photoreceptor cilia causes Leber congenital amaurosis in humans and mice.</title>
        <authorList>
            <person name="Boldt K."/>
            <person name="Mans D.A."/>
            <person name="Won J."/>
            <person name="van Reeuwijk J."/>
            <person name="Vogt A."/>
            <person name="Kinkl N."/>
            <person name="Letteboer S.J."/>
            <person name="Hicks W.L."/>
            <person name="Hurd R.E."/>
            <person name="Naggert J.K."/>
            <person name="Texier Y."/>
            <person name="den Hollander A.I."/>
            <person name="Koenekoop R.K."/>
            <person name="Bennett J."/>
            <person name="Cremers F.P."/>
            <person name="Gloeckner C.J."/>
            <person name="Nishina P.M."/>
            <person name="Roepman R."/>
            <person name="Ueffing M."/>
        </authorList>
    </citation>
    <scope>SUBCELLULAR LOCATION</scope>
    <scope>INTERACTION WITH COMPONENTS OF THE IFT COMPLEX B</scope>
</reference>
<reference key="12">
    <citation type="journal article" date="2017" name="Invest. Ophthalmol. Vis. Sci.">
        <title>Homozygosity Mapping and Genetic Analysis of Autosomal Recessive Retinal Dystrophies in 144 Consanguineous Pakistani Families.</title>
        <authorList>
            <person name="Li L."/>
            <person name="Chen Y."/>
            <person name="Jiao X."/>
            <person name="Jin C."/>
            <person name="Jiang D."/>
            <person name="Tanwar M."/>
            <person name="Ma Z."/>
            <person name="Huang L."/>
            <person name="Ma X."/>
            <person name="Sun W."/>
            <person name="Chen J."/>
            <person name="Ma Y."/>
            <person name="M'hamdi O."/>
            <person name="Govindarajan G."/>
            <person name="Cabrera P.E."/>
            <person name="Li J."/>
            <person name="Gupta N."/>
            <person name="Naeem M.A."/>
            <person name="Khan S.N."/>
            <person name="Riazuddin S."/>
            <person name="Akram J."/>
            <person name="Ayyagari R."/>
            <person name="Sieving P.A."/>
            <person name="Riazuddin S.A."/>
            <person name="Hejtmancik J.F."/>
        </authorList>
    </citation>
    <scope>VARIANT LCA5 GLY-218</scope>
</reference>
<organism>
    <name type="scientific">Homo sapiens</name>
    <name type="common">Human</name>
    <dbReference type="NCBI Taxonomy" id="9606"/>
    <lineage>
        <taxon>Eukaryota</taxon>
        <taxon>Metazoa</taxon>
        <taxon>Chordata</taxon>
        <taxon>Craniata</taxon>
        <taxon>Vertebrata</taxon>
        <taxon>Euteleostomi</taxon>
        <taxon>Mammalia</taxon>
        <taxon>Eutheria</taxon>
        <taxon>Euarchontoglires</taxon>
        <taxon>Primates</taxon>
        <taxon>Haplorrhini</taxon>
        <taxon>Catarrhini</taxon>
        <taxon>Hominidae</taxon>
        <taxon>Homo</taxon>
    </lineage>
</organism>
<sequence>MGERAGSPGTDQERKAGKHHYSYLSDFETPQSSGRSSLVSSSPASVRRKNPKRQTSDGQVHHQAPRKPSPKGLPNRKGVRVGFRSQSLNREPLRKDTDLVTKRILSARLLKINELQNEVSELQVKLAELLKENKSLKRLQYRQEKALNKFEDAENEISQLIFRHNNEITALKERLRKSQEKERATEKRVKDTESELFRTKFSLQKLKEISEARHLPERDDLAKKLVSAELKLDDTERRIKELSKNLELSTNSFQRQLLAERKRAYEAHDENKVLQKEVQRLYHKLKEKERELDIKNIYSNRLPKSSPNKEKELALRKNAACQSDFADLCTKGVQTMEDFKPEEYPLTPETIMCYENKWEEPGHLTLDLQSQKQDRHGEAGILNPIMEREEKFVTDEELHVVKQEVEKLEDEWEREELDKKQKEKASLLEREEKPEWETGRYQLGMYPIQNMDKLQGEEEERLKREMLLAKLNEIDRELQDSRNLKYPVLPLLPDFESKLHSPERSPKTYRFSESSERLFNGHHLQDISFSTPKGEGQNSGNVRSPASPNEFAFGSYVPSFAKTSERSNPFSQKSSFLDFQRNSMEKLSKDGVDLITRKEKKANLMEQLFGASGSSTISSKSSDPNSVASSKGDIDPLNFLPGNKGSRDQEHDEDEGFFLSEGRSFNPNRHRLKHADDKPAVKAADSVEDEIEEVALR</sequence>
<evidence type="ECO:0000250" key="1">
    <source>
        <dbReference type="UniProtKB" id="Q80ST9"/>
    </source>
</evidence>
<evidence type="ECO:0000255" key="2"/>
<evidence type="ECO:0000256" key="3">
    <source>
        <dbReference type="SAM" id="MobiDB-lite"/>
    </source>
</evidence>
<evidence type="ECO:0000269" key="4">
    <source>
    </source>
</evidence>
<evidence type="ECO:0000269" key="5">
    <source>
    </source>
</evidence>
<evidence type="ECO:0000269" key="6">
    <source>
    </source>
</evidence>
<evidence type="ECO:0000269" key="7">
    <source>
    </source>
</evidence>
<evidence type="ECO:0000269" key="8">
    <source>
    </source>
</evidence>
<evidence type="ECO:0000269" key="9">
    <source>
    </source>
</evidence>
<evidence type="ECO:0000269" key="10">
    <source>
    </source>
</evidence>
<evidence type="ECO:0000269" key="11">
    <source>
    </source>
</evidence>
<evidence type="ECO:0000269" key="12">
    <source>
    </source>
</evidence>
<evidence type="ECO:0000269" key="13">
    <source ref="2"/>
</evidence>
<evidence type="ECO:0000303" key="14">
    <source>
    </source>
</evidence>
<evidence type="ECO:0000305" key="15"/>
<evidence type="ECO:0007744" key="16">
    <source>
    </source>
</evidence>
<keyword id="KW-0966">Cell projection</keyword>
<keyword id="KW-0969">Cilium</keyword>
<keyword id="KW-0175">Coiled coil</keyword>
<keyword id="KW-0963">Cytoplasm</keyword>
<keyword id="KW-0206">Cytoskeleton</keyword>
<keyword id="KW-0225">Disease variant</keyword>
<keyword id="KW-0901">Leber congenital amaurosis</keyword>
<keyword id="KW-0597">Phosphoprotein</keyword>
<keyword id="KW-0653">Protein transport</keyword>
<keyword id="KW-1267">Proteomics identification</keyword>
<keyword id="KW-1185">Reference proteome</keyword>
<keyword id="KW-0813">Transport</keyword>
<comment type="function">
    <text evidence="1">Involved in intraflagellar protein (IFT) transport in photoreceptor cilia.</text>
</comment>
<comment type="subunit">
    <text evidence="8 9 10 11">Interacts with NINL (PubMed:18826961). Interacts with OFD1 (PubMed:19800048). Interacts with FAM161A (PubMed:22940612). Interacts with components of the IFT complex B (PubMed:21606596).</text>
</comment>
<comment type="interaction">
    <interactant intactId="EBI-6658186">
        <id>Q86VQ0</id>
    </interactant>
    <interactant intactId="EBI-746252">
        <id>Q96CN9</id>
        <label>GCC1</label>
    </interactant>
    <organismsDiffer>false</organismsDiffer>
    <experiments>3</experiments>
</comment>
<comment type="interaction">
    <interactant intactId="EBI-6658186">
        <id>Q86VQ0</id>
    </interactant>
    <interactant intactId="EBI-743428">
        <id>Q9P2K3</id>
        <label>RCOR3</label>
    </interactant>
    <organismsDiffer>false</organismsDiffer>
    <experiments>3</experiments>
</comment>
<comment type="interaction">
    <interactant intactId="EBI-6658186">
        <id>Q86VQ0</id>
    </interactant>
    <interactant intactId="EBI-1504830">
        <id>Q9P2K3-2</id>
        <label>RCOR3</label>
    </interactant>
    <organismsDiffer>false</organismsDiffer>
    <experiments>3</experiments>
</comment>
<comment type="interaction">
    <interactant intactId="EBI-6658186">
        <id>Q86VQ0</id>
    </interactant>
    <interactant intactId="EBI-2515299">
        <id>O43805</id>
        <label>SSNA1</label>
    </interactant>
    <organismsDiffer>false</organismsDiffer>
    <experiments>3</experiments>
</comment>
<comment type="interaction">
    <interactant intactId="EBI-6658186">
        <id>Q86VQ0</id>
    </interactant>
    <interactant intactId="EBI-740595">
        <id>Q9UMX1</id>
        <label>SUFU</label>
    </interactant>
    <organismsDiffer>false</organismsDiffer>
    <experiments>3</experiments>
</comment>
<comment type="interaction">
    <interactant intactId="EBI-6658186">
        <id>Q86VQ0</id>
    </interactant>
    <interactant intactId="EBI-1105213">
        <id>Q9UBB9</id>
        <label>TFIP11</label>
    </interactant>
    <organismsDiffer>false</organismsDiffer>
    <experiments>4</experiments>
</comment>
<comment type="interaction">
    <interactant intactId="EBI-6658186">
        <id>Q86VQ0</id>
    </interactant>
    <interactant intactId="EBI-359793">
        <id>P40222</id>
        <label>TXLNA</label>
    </interactant>
    <organismsDiffer>false</organismsDiffer>
    <experiments>3</experiments>
</comment>
<comment type="subcellular location">
    <subcellularLocation>
        <location evidence="5">Cytoplasm</location>
        <location evidence="5">Cytoskeleton</location>
    </subcellularLocation>
    <subcellularLocation>
        <location evidence="5">Cytoplasm</location>
        <location evidence="5">Cytoskeleton</location>
        <location evidence="5">Cilium axoneme</location>
    </subcellularLocation>
    <subcellularLocation>
        <location evidence="5">Cytoplasm</location>
        <location evidence="5">Cytoskeleton</location>
        <location evidence="5">Cilium basal body</location>
    </subcellularLocation>
    <subcellularLocation>
        <location evidence="5">Cytoplasm</location>
        <location evidence="5">Cytoskeleton</location>
        <location evidence="5">Microtubule organizing center</location>
        <location evidence="5">Centrosome</location>
    </subcellularLocation>
    <subcellularLocation>
        <location evidence="10">Cell projection</location>
        <location evidence="10">Cilium</location>
    </subcellularLocation>
    <text evidence="5 10">In non- ciliated cells, localizes to the centrosome and its associated microtubule array (PubMed:17546029). Colocalizes with IFT complex A and B proteins in the connecting cilium in primary cilia of hTERT-RPE1 cells (PubMed:21606596).</text>
</comment>
<comment type="tissue specificity">
    <text evidence="5">Widely expressed.</text>
</comment>
<comment type="disease" evidence="5 6 7 12">
    <disease id="DI-00633">
        <name>Leber congenital amaurosis 5</name>
        <acronym>LCA5</acronym>
        <description>A severe dystrophy of the retina, typically becoming evident in the first years of life. Visual function is usually poor and often accompanied by nystagmus, sluggish or near-absent pupillary responses, photophobia, high hyperopia and keratoconus.</description>
        <dbReference type="MIM" id="604537"/>
    </disease>
    <text>The disease is caused by variants affecting the gene represented in this entry.</text>
</comment>
<comment type="similarity">
    <text evidence="15">Belongs to the LCA5 family.</text>
</comment>
<accession>Q86VQ0</accession>
<accession>E1P542</accession>
<accession>Q9BWX7</accession>
<name>LCA5_HUMAN</name>
<proteinExistence type="evidence at protein level"/>